<feature type="chain" id="PRO_0000060106" description="Galactose/methyl galactoside import permease protein MglC">
    <location>
        <begin position="1"/>
        <end position="336"/>
    </location>
</feature>
<feature type="topological domain" description="Periplasmic" evidence="3">
    <location>
        <begin position="1"/>
        <end position="16"/>
    </location>
</feature>
<feature type="transmembrane region" description="Helical" evidence="1">
    <location>
        <begin position="17"/>
        <end position="37"/>
    </location>
</feature>
<feature type="topological domain" description="Cytoplasmic" evidence="3">
    <location>
        <begin position="38"/>
        <end position="52"/>
    </location>
</feature>
<feature type="transmembrane region" description="Helical" evidence="1">
    <location>
        <begin position="53"/>
        <end position="73"/>
    </location>
</feature>
<feature type="topological domain" description="Periplasmic" evidence="3">
    <location>
        <begin position="74"/>
        <end position="106"/>
    </location>
</feature>
<feature type="transmembrane region" description="Helical" evidence="1">
    <location>
        <begin position="107"/>
        <end position="127"/>
    </location>
</feature>
<feature type="transmembrane region" description="Helical" evidence="1">
    <location>
        <begin position="128"/>
        <end position="148"/>
    </location>
</feature>
<feature type="topological domain" description="Periplasmic" evidence="3">
    <location>
        <begin position="149"/>
        <end position="180"/>
    </location>
</feature>
<feature type="transmembrane region" description="Helical" evidence="1">
    <location>
        <begin position="181"/>
        <end position="201"/>
    </location>
</feature>
<feature type="topological domain" description="Cytoplasmic" evidence="3">
    <location>
        <begin position="202"/>
        <end position="226"/>
    </location>
</feature>
<feature type="transmembrane region" description="Helical" evidence="1">
    <location>
        <begin position="227"/>
        <end position="247"/>
    </location>
</feature>
<feature type="topological domain" description="Periplasmic" evidence="3">
    <location>
        <begin position="248"/>
        <end position="256"/>
    </location>
</feature>
<feature type="transmembrane region" description="Helical" evidence="1">
    <location>
        <begin position="257"/>
        <end position="277"/>
    </location>
</feature>
<feature type="topological domain" description="Cytoplasmic" evidence="3">
    <location>
        <position position="278"/>
    </location>
</feature>
<feature type="transmembrane region" description="Helical" evidence="1">
    <location>
        <begin position="279"/>
        <end position="299"/>
    </location>
</feature>
<feature type="topological domain" description="Periplasmic" evidence="3">
    <location>
        <begin position="300"/>
        <end position="305"/>
    </location>
</feature>
<feature type="transmembrane region" description="Helical" evidence="1">
    <location>
        <begin position="306"/>
        <end position="326"/>
    </location>
</feature>
<feature type="topological domain" description="Cytoplasmic" evidence="2">
    <location>
        <begin position="327"/>
        <end position="336"/>
    </location>
</feature>
<proteinExistence type="evidence at protein level"/>
<evidence type="ECO:0000255" key="1"/>
<evidence type="ECO:0000269" key="2">
    <source>
    </source>
</evidence>
<evidence type="ECO:0000305" key="3"/>
<evidence type="ECO:0000305" key="4">
    <source>
    </source>
</evidence>
<evidence type="ECO:0000305" key="5">
    <source>
    </source>
</evidence>
<organism>
    <name type="scientific">Escherichia coli (strain K12)</name>
    <dbReference type="NCBI Taxonomy" id="83333"/>
    <lineage>
        <taxon>Bacteria</taxon>
        <taxon>Pseudomonadati</taxon>
        <taxon>Pseudomonadota</taxon>
        <taxon>Gammaproteobacteria</taxon>
        <taxon>Enterobacterales</taxon>
        <taxon>Enterobacteriaceae</taxon>
        <taxon>Escherichia</taxon>
    </lineage>
</organism>
<gene>
    <name type="primary">mglC</name>
    <name type="ordered locus">b2148</name>
    <name type="ordered locus">JW2135</name>
</gene>
<protein>
    <recommendedName>
        <fullName evidence="3">Galactose/methyl galactoside import permease protein MglC</fullName>
    </recommendedName>
</protein>
<name>MGLC_ECOLI</name>
<reference key="1">
    <citation type="journal article" date="1991" name="Mol. Gen. Genet.">
        <title>Nucleotide sequence and analysis of the mgl operon of Escherichia coli K12.</title>
        <authorList>
            <person name="Hogg R.W."/>
            <person name="Voelker C."/>
            <person name="von Carlowitz I."/>
        </authorList>
    </citation>
    <scope>NUCLEOTIDE SEQUENCE [GENOMIC DNA]</scope>
    <scope>SUBUNIT</scope>
    <source>
        <strain>K12</strain>
    </source>
</reference>
<reference key="2">
    <citation type="journal article" date="1997" name="Science">
        <title>The complete genome sequence of Escherichia coli K-12.</title>
        <authorList>
            <person name="Blattner F.R."/>
            <person name="Plunkett G. III"/>
            <person name="Bloch C.A."/>
            <person name="Perna N.T."/>
            <person name="Burland V."/>
            <person name="Riley M."/>
            <person name="Collado-Vides J."/>
            <person name="Glasner J.D."/>
            <person name="Rode C.K."/>
            <person name="Mayhew G.F."/>
            <person name="Gregor J."/>
            <person name="Davis N.W."/>
            <person name="Kirkpatrick H.A."/>
            <person name="Goeden M.A."/>
            <person name="Rose D.J."/>
            <person name="Mau B."/>
            <person name="Shao Y."/>
        </authorList>
    </citation>
    <scope>NUCLEOTIDE SEQUENCE [LARGE SCALE GENOMIC DNA]</scope>
    <source>
        <strain>K12 / MG1655 / ATCC 47076</strain>
    </source>
</reference>
<reference key="3">
    <citation type="journal article" date="2006" name="Mol. Syst. Biol.">
        <title>Highly accurate genome sequences of Escherichia coli K-12 strains MG1655 and W3110.</title>
        <authorList>
            <person name="Hayashi K."/>
            <person name="Morooka N."/>
            <person name="Yamamoto Y."/>
            <person name="Fujita K."/>
            <person name="Isono K."/>
            <person name="Choi S."/>
            <person name="Ohtsubo E."/>
            <person name="Baba T."/>
            <person name="Wanner B.L."/>
            <person name="Mori H."/>
            <person name="Horiuchi T."/>
        </authorList>
    </citation>
    <scope>NUCLEOTIDE SEQUENCE [LARGE SCALE GENOMIC DNA]</scope>
    <source>
        <strain>K12 / W3110 / ATCC 27325 / DSM 5911</strain>
    </source>
</reference>
<reference key="4">
    <citation type="journal article" date="1982" name="J. Biol. Chem.">
        <title>Identification of the mglA gene product in the beta-methylgalactoside transport system of Escherichia coli using plasmid DNA deletions generated in vitro.</title>
        <authorList>
            <person name="Rotman B."/>
            <person name="Guzman R."/>
        </authorList>
    </citation>
    <scope>FUNCTION IN METHYL GALACTOSIDE TRANSPORT</scope>
</reference>
<reference key="5">
    <citation type="journal article" date="2005" name="Science">
        <title>Global topology analysis of the Escherichia coli inner membrane proteome.</title>
        <authorList>
            <person name="Daley D.O."/>
            <person name="Rapp M."/>
            <person name="Granseth E."/>
            <person name="Melen K."/>
            <person name="Drew D."/>
            <person name="von Heijne G."/>
        </authorList>
    </citation>
    <scope>TOPOLOGY [LARGE SCALE ANALYSIS]</scope>
    <scope>SUBCELLULAR LOCATION</scope>
    <source>
        <strain>K12 / MG1655 / ATCC 47076</strain>
    </source>
</reference>
<dbReference type="EMBL" id="M59444">
    <property type="protein sequence ID" value="AAA24171.1"/>
    <property type="molecule type" value="Genomic_DNA"/>
</dbReference>
<dbReference type="EMBL" id="U00096">
    <property type="protein sequence ID" value="AAC75209.1"/>
    <property type="molecule type" value="Genomic_DNA"/>
</dbReference>
<dbReference type="EMBL" id="AP009048">
    <property type="protein sequence ID" value="BAE76625.1"/>
    <property type="molecule type" value="Genomic_DNA"/>
</dbReference>
<dbReference type="PIR" id="C37277">
    <property type="entry name" value="C37277"/>
</dbReference>
<dbReference type="RefSeq" id="NP_416653.1">
    <property type="nucleotide sequence ID" value="NC_000913.3"/>
</dbReference>
<dbReference type="RefSeq" id="WP_001275118.1">
    <property type="nucleotide sequence ID" value="NZ_STEB01000002.1"/>
</dbReference>
<dbReference type="BioGRID" id="4259171">
    <property type="interactions" value="6"/>
</dbReference>
<dbReference type="ComplexPortal" id="CPX-4341">
    <property type="entry name" value="Beta-methyl-D-galactoside/galactose ABC transporter complex"/>
</dbReference>
<dbReference type="FunCoup" id="P23200">
    <property type="interactions" value="219"/>
</dbReference>
<dbReference type="STRING" id="511145.b2148"/>
<dbReference type="TCDB" id="3.A.1.2.3">
    <property type="family name" value="the atp-binding cassette (abc) superfamily"/>
</dbReference>
<dbReference type="jPOST" id="P23200"/>
<dbReference type="PaxDb" id="511145-b2148"/>
<dbReference type="EnsemblBacteria" id="AAC75209">
    <property type="protein sequence ID" value="AAC75209"/>
    <property type="gene ID" value="b2148"/>
</dbReference>
<dbReference type="GeneID" id="93775034"/>
<dbReference type="GeneID" id="949039"/>
<dbReference type="KEGG" id="ecj:JW2135"/>
<dbReference type="KEGG" id="eco:b2148"/>
<dbReference type="KEGG" id="ecoc:C3026_12035"/>
<dbReference type="PATRIC" id="fig|1411691.4.peg.93"/>
<dbReference type="EchoBASE" id="EB0589"/>
<dbReference type="eggNOG" id="COG4211">
    <property type="taxonomic scope" value="Bacteria"/>
</dbReference>
<dbReference type="HOGENOM" id="CLU_028880_1_0_6"/>
<dbReference type="InParanoid" id="P23200"/>
<dbReference type="OMA" id="IWVGSRQ"/>
<dbReference type="OrthoDB" id="8843934at2"/>
<dbReference type="PhylomeDB" id="P23200"/>
<dbReference type="BioCyc" id="EcoCyc:MGLC-MONOMER"/>
<dbReference type="BioCyc" id="MetaCyc:MGLC-MONOMER"/>
<dbReference type="PRO" id="PR:P23200"/>
<dbReference type="Proteomes" id="UP000000625">
    <property type="component" value="Chromosome"/>
</dbReference>
<dbReference type="GO" id="GO:0055052">
    <property type="term" value="C:ATP-binding cassette (ABC) transporter complex, substrate-binding subunit-containing"/>
    <property type="evidence" value="ECO:0000303"/>
    <property type="project" value="ComplexPortal"/>
</dbReference>
<dbReference type="GO" id="GO:0016020">
    <property type="term" value="C:membrane"/>
    <property type="evidence" value="ECO:0000303"/>
    <property type="project" value="ComplexPortal"/>
</dbReference>
<dbReference type="GO" id="GO:0005886">
    <property type="term" value="C:plasma membrane"/>
    <property type="evidence" value="ECO:0000314"/>
    <property type="project" value="EcoCyc"/>
</dbReference>
<dbReference type="GO" id="GO:0005354">
    <property type="term" value="F:galactose transmembrane transporter activity"/>
    <property type="evidence" value="ECO:0000315"/>
    <property type="project" value="EcoCyc"/>
</dbReference>
<dbReference type="GO" id="GO:0015592">
    <property type="term" value="F:methylgalactoside transmembrane transporter activity"/>
    <property type="evidence" value="ECO:0000315"/>
    <property type="project" value="EcoCyc"/>
</dbReference>
<dbReference type="GO" id="GO:0006974">
    <property type="term" value="P:DNA damage response"/>
    <property type="evidence" value="ECO:0000270"/>
    <property type="project" value="EcoliWiki"/>
</dbReference>
<dbReference type="GO" id="GO:0015757">
    <property type="term" value="P:galactose transmembrane transport"/>
    <property type="evidence" value="ECO:0000315"/>
    <property type="project" value="EcoCyc"/>
</dbReference>
<dbReference type="GO" id="GO:0015765">
    <property type="term" value="P:methylgalactoside transport"/>
    <property type="evidence" value="ECO:0000315"/>
    <property type="project" value="EcoCyc"/>
</dbReference>
<dbReference type="CDD" id="cd06579">
    <property type="entry name" value="TM_PBP1_transp_AraH_like"/>
    <property type="match status" value="1"/>
</dbReference>
<dbReference type="InterPro" id="IPR001851">
    <property type="entry name" value="ABC_transp_permease"/>
</dbReference>
<dbReference type="NCBIfam" id="NF007014">
    <property type="entry name" value="PRK09478.1"/>
    <property type="match status" value="1"/>
</dbReference>
<dbReference type="PANTHER" id="PTHR32196">
    <property type="entry name" value="ABC TRANSPORTER PERMEASE PROTEIN YPHD-RELATED-RELATED"/>
    <property type="match status" value="1"/>
</dbReference>
<dbReference type="PANTHER" id="PTHR32196:SF18">
    <property type="entry name" value="GALACTOSE_METHYL GALACTOSIDE IMPORT PERMEASE PROTEIN MGLC"/>
    <property type="match status" value="1"/>
</dbReference>
<dbReference type="Pfam" id="PF02653">
    <property type="entry name" value="BPD_transp_2"/>
    <property type="match status" value="1"/>
</dbReference>
<accession>P23200</accession>
<accession>Q2MAT1</accession>
<keyword id="KW-0997">Cell inner membrane</keyword>
<keyword id="KW-1003">Cell membrane</keyword>
<keyword id="KW-0472">Membrane</keyword>
<keyword id="KW-1185">Reference proteome</keyword>
<keyword id="KW-0762">Sugar transport</keyword>
<keyword id="KW-0812">Transmembrane</keyword>
<keyword id="KW-1133">Transmembrane helix</keyword>
<keyword id="KW-0813">Transport</keyword>
<sequence>MSALNKKSFLTYLKEGGIYVVLLVLLAIIIFQDPTFLSLLNLSNILTQSSVRIIIALGVAGLIVTQGTDLSAGRQVGLAAVVAATLLQSMDNANKVFPEMATMPIALVILIVCAIGAVIGLINGLIIAYLNVTPFITTLGTMIIVYGINSLYYDFVGASPISGFDSGFSTFAQGFVALGSFRLSYITFYALIAVAFVWVLWNKTRFGKNIFAIGGNPEAAKVSGVNVGLNLLMIYALSGVFYAFGGMLEAGRIGSATNNLGFMYELDAIAACVVGGVSFSGGVGTVIGVVTGVIIFTVINYGLTYIGVNPYWQYIIKGAIIIFAVALDSLKYARKK</sequence>
<comment type="function">
    <text evidence="4 5">Part of the ABC transporter complex MglABC involved in galactose/methyl galactoside import. Probably responsible for the translocation of the substrate across the membrane.</text>
</comment>
<comment type="subunit">
    <text evidence="4">The complex is composed of one ATP-binding protein (MglA), two transmembrane proteins (MglC) and a solute-binding protein (MglB).</text>
</comment>
<comment type="subcellular location">
    <subcellularLocation>
        <location evidence="2">Cell inner membrane</location>
        <topology evidence="1">Multi-pass membrane protein</topology>
    </subcellularLocation>
</comment>
<comment type="similarity">
    <text evidence="3">Belongs to the binding-protein-dependent transport system permease family. AraH/RbsC subfamily.</text>
</comment>